<evidence type="ECO:0000255" key="1">
    <source>
        <dbReference type="HAMAP-Rule" id="MF_00004"/>
    </source>
</evidence>
<feature type="chain" id="PRO_0000149474" description="Adenine phosphoribosyltransferase">
    <location>
        <begin position="1"/>
        <end position="170"/>
    </location>
</feature>
<sequence length="170" mass="18617">MDLKSLIRDVPDFPKPGILFRDLTTLLQNQAGLRYVIDQLVEKHANAGIDYVAGIESRGFIFGAPLAYRLGAGFIPLRKPGKLCAPVYAVEYELEYGRDRLEMHQDAIEPGRRVLIVDDLIATGGTAAAAAGLIQKAQAELYGFAFIVELTDLAGRQKLPDVPITTLVTY</sequence>
<reference key="1">
    <citation type="journal article" date="2002" name="DNA Res.">
        <title>Complete genome structure of the thermophilic cyanobacterium Thermosynechococcus elongatus BP-1.</title>
        <authorList>
            <person name="Nakamura Y."/>
            <person name="Kaneko T."/>
            <person name="Sato S."/>
            <person name="Ikeuchi M."/>
            <person name="Katoh H."/>
            <person name="Sasamoto S."/>
            <person name="Watanabe A."/>
            <person name="Iriguchi M."/>
            <person name="Kawashima K."/>
            <person name="Kimura T."/>
            <person name="Kishida Y."/>
            <person name="Kiyokawa C."/>
            <person name="Kohara M."/>
            <person name="Matsumoto M."/>
            <person name="Matsuno A."/>
            <person name="Nakazaki N."/>
            <person name="Shimpo S."/>
            <person name="Sugimoto M."/>
            <person name="Takeuchi C."/>
            <person name="Yamada M."/>
            <person name="Tabata S."/>
        </authorList>
    </citation>
    <scope>NUCLEOTIDE SEQUENCE [LARGE SCALE GENOMIC DNA]</scope>
    <source>
        <strain>NIES-2133 / IAM M-273 / BP-1</strain>
    </source>
</reference>
<accession>Q8DGH9</accession>
<gene>
    <name evidence="1" type="primary">apt</name>
    <name type="ordered locus">tlr2338</name>
</gene>
<protein>
    <recommendedName>
        <fullName evidence="1">Adenine phosphoribosyltransferase</fullName>
        <shortName evidence="1">APRT</shortName>
        <ecNumber evidence="1">2.4.2.7</ecNumber>
    </recommendedName>
</protein>
<dbReference type="EC" id="2.4.2.7" evidence="1"/>
<dbReference type="EMBL" id="BA000039">
    <property type="protein sequence ID" value="BAC09890.1"/>
    <property type="molecule type" value="Genomic_DNA"/>
</dbReference>
<dbReference type="RefSeq" id="NP_683128.1">
    <property type="nucleotide sequence ID" value="NC_004113.1"/>
</dbReference>
<dbReference type="RefSeq" id="WP_011058171.1">
    <property type="nucleotide sequence ID" value="NC_004113.1"/>
</dbReference>
<dbReference type="SMR" id="Q8DGH9"/>
<dbReference type="STRING" id="197221.gene:10748957"/>
<dbReference type="EnsemblBacteria" id="BAC09890">
    <property type="protein sequence ID" value="BAC09890"/>
    <property type="gene ID" value="BAC09890"/>
</dbReference>
<dbReference type="KEGG" id="tel:tlr2338"/>
<dbReference type="PATRIC" id="fig|197221.4.peg.2451"/>
<dbReference type="eggNOG" id="COG0503">
    <property type="taxonomic scope" value="Bacteria"/>
</dbReference>
<dbReference type="UniPathway" id="UPA00588">
    <property type="reaction ID" value="UER00646"/>
</dbReference>
<dbReference type="Proteomes" id="UP000000440">
    <property type="component" value="Chromosome"/>
</dbReference>
<dbReference type="GO" id="GO:0005737">
    <property type="term" value="C:cytoplasm"/>
    <property type="evidence" value="ECO:0007669"/>
    <property type="project" value="UniProtKB-SubCell"/>
</dbReference>
<dbReference type="GO" id="GO:0002055">
    <property type="term" value="F:adenine binding"/>
    <property type="evidence" value="ECO:0007669"/>
    <property type="project" value="TreeGrafter"/>
</dbReference>
<dbReference type="GO" id="GO:0003999">
    <property type="term" value="F:adenine phosphoribosyltransferase activity"/>
    <property type="evidence" value="ECO:0007669"/>
    <property type="project" value="UniProtKB-UniRule"/>
</dbReference>
<dbReference type="GO" id="GO:0016208">
    <property type="term" value="F:AMP binding"/>
    <property type="evidence" value="ECO:0007669"/>
    <property type="project" value="TreeGrafter"/>
</dbReference>
<dbReference type="GO" id="GO:0006168">
    <property type="term" value="P:adenine salvage"/>
    <property type="evidence" value="ECO:0007669"/>
    <property type="project" value="InterPro"/>
</dbReference>
<dbReference type="GO" id="GO:0044209">
    <property type="term" value="P:AMP salvage"/>
    <property type="evidence" value="ECO:0007669"/>
    <property type="project" value="UniProtKB-UniRule"/>
</dbReference>
<dbReference type="GO" id="GO:0006166">
    <property type="term" value="P:purine ribonucleoside salvage"/>
    <property type="evidence" value="ECO:0007669"/>
    <property type="project" value="UniProtKB-KW"/>
</dbReference>
<dbReference type="CDD" id="cd06223">
    <property type="entry name" value="PRTases_typeI"/>
    <property type="match status" value="1"/>
</dbReference>
<dbReference type="FunFam" id="3.40.50.2020:FF:000004">
    <property type="entry name" value="Adenine phosphoribosyltransferase"/>
    <property type="match status" value="1"/>
</dbReference>
<dbReference type="Gene3D" id="3.40.50.2020">
    <property type="match status" value="1"/>
</dbReference>
<dbReference type="HAMAP" id="MF_00004">
    <property type="entry name" value="Aden_phosphoribosyltr"/>
    <property type="match status" value="1"/>
</dbReference>
<dbReference type="InterPro" id="IPR005764">
    <property type="entry name" value="Ade_phspho_trans"/>
</dbReference>
<dbReference type="InterPro" id="IPR000836">
    <property type="entry name" value="PRibTrfase_dom"/>
</dbReference>
<dbReference type="InterPro" id="IPR029057">
    <property type="entry name" value="PRTase-like"/>
</dbReference>
<dbReference type="InterPro" id="IPR050054">
    <property type="entry name" value="UPRTase/APRTase"/>
</dbReference>
<dbReference type="NCBIfam" id="TIGR01090">
    <property type="entry name" value="apt"/>
    <property type="match status" value="1"/>
</dbReference>
<dbReference type="NCBIfam" id="NF002634">
    <property type="entry name" value="PRK02304.1-3"/>
    <property type="match status" value="1"/>
</dbReference>
<dbReference type="NCBIfam" id="NF002636">
    <property type="entry name" value="PRK02304.1-5"/>
    <property type="match status" value="1"/>
</dbReference>
<dbReference type="PANTHER" id="PTHR32315">
    <property type="entry name" value="ADENINE PHOSPHORIBOSYLTRANSFERASE"/>
    <property type="match status" value="1"/>
</dbReference>
<dbReference type="PANTHER" id="PTHR32315:SF3">
    <property type="entry name" value="ADENINE PHOSPHORIBOSYLTRANSFERASE"/>
    <property type="match status" value="1"/>
</dbReference>
<dbReference type="Pfam" id="PF00156">
    <property type="entry name" value="Pribosyltran"/>
    <property type="match status" value="1"/>
</dbReference>
<dbReference type="SUPFAM" id="SSF53271">
    <property type="entry name" value="PRTase-like"/>
    <property type="match status" value="1"/>
</dbReference>
<dbReference type="PROSITE" id="PS00103">
    <property type="entry name" value="PUR_PYR_PR_TRANSFER"/>
    <property type="match status" value="1"/>
</dbReference>
<keyword id="KW-0963">Cytoplasm</keyword>
<keyword id="KW-0328">Glycosyltransferase</keyword>
<keyword id="KW-0660">Purine salvage</keyword>
<keyword id="KW-1185">Reference proteome</keyword>
<keyword id="KW-0808">Transferase</keyword>
<comment type="function">
    <text evidence="1">Catalyzes a salvage reaction resulting in the formation of AMP, that is energically less costly than de novo synthesis.</text>
</comment>
<comment type="catalytic activity">
    <reaction evidence="1">
        <text>AMP + diphosphate = 5-phospho-alpha-D-ribose 1-diphosphate + adenine</text>
        <dbReference type="Rhea" id="RHEA:16609"/>
        <dbReference type="ChEBI" id="CHEBI:16708"/>
        <dbReference type="ChEBI" id="CHEBI:33019"/>
        <dbReference type="ChEBI" id="CHEBI:58017"/>
        <dbReference type="ChEBI" id="CHEBI:456215"/>
        <dbReference type="EC" id="2.4.2.7"/>
    </reaction>
</comment>
<comment type="pathway">
    <text evidence="1">Purine metabolism; AMP biosynthesis via salvage pathway; AMP from adenine: step 1/1.</text>
</comment>
<comment type="subunit">
    <text evidence="1">Homodimer.</text>
</comment>
<comment type="subcellular location">
    <subcellularLocation>
        <location evidence="1">Cytoplasm</location>
    </subcellularLocation>
</comment>
<comment type="similarity">
    <text evidence="1">Belongs to the purine/pyrimidine phosphoribosyltransferase family.</text>
</comment>
<name>APT_THEVB</name>
<proteinExistence type="inferred from homology"/>
<organism>
    <name type="scientific">Thermosynechococcus vestitus (strain NIES-2133 / IAM M-273 / BP-1)</name>
    <dbReference type="NCBI Taxonomy" id="197221"/>
    <lineage>
        <taxon>Bacteria</taxon>
        <taxon>Bacillati</taxon>
        <taxon>Cyanobacteriota</taxon>
        <taxon>Cyanophyceae</taxon>
        <taxon>Acaryochloridales</taxon>
        <taxon>Thermosynechococcaceae</taxon>
        <taxon>Thermosynechococcus</taxon>
    </lineage>
</organism>